<dbReference type="EC" id="6.1.1.9" evidence="1"/>
<dbReference type="EMBL" id="CP000812">
    <property type="protein sequence ID" value="ABV34537.1"/>
    <property type="molecule type" value="Genomic_DNA"/>
</dbReference>
<dbReference type="RefSeq" id="WP_012004013.1">
    <property type="nucleotide sequence ID" value="NZ_BSDV01000001.1"/>
</dbReference>
<dbReference type="SMR" id="A8F8Q3"/>
<dbReference type="STRING" id="416591.Tlet_1983"/>
<dbReference type="KEGG" id="tle:Tlet_1983"/>
<dbReference type="eggNOG" id="COG0525">
    <property type="taxonomic scope" value="Bacteria"/>
</dbReference>
<dbReference type="HOGENOM" id="CLU_001493_0_2_0"/>
<dbReference type="OrthoDB" id="9810365at2"/>
<dbReference type="Proteomes" id="UP000002016">
    <property type="component" value="Chromosome"/>
</dbReference>
<dbReference type="GO" id="GO:0005829">
    <property type="term" value="C:cytosol"/>
    <property type="evidence" value="ECO:0007669"/>
    <property type="project" value="TreeGrafter"/>
</dbReference>
<dbReference type="GO" id="GO:0002161">
    <property type="term" value="F:aminoacyl-tRNA deacylase activity"/>
    <property type="evidence" value="ECO:0007669"/>
    <property type="project" value="InterPro"/>
</dbReference>
<dbReference type="GO" id="GO:0005524">
    <property type="term" value="F:ATP binding"/>
    <property type="evidence" value="ECO:0007669"/>
    <property type="project" value="UniProtKB-UniRule"/>
</dbReference>
<dbReference type="GO" id="GO:0004832">
    <property type="term" value="F:valine-tRNA ligase activity"/>
    <property type="evidence" value="ECO:0007669"/>
    <property type="project" value="UniProtKB-UniRule"/>
</dbReference>
<dbReference type="GO" id="GO:0006438">
    <property type="term" value="P:valyl-tRNA aminoacylation"/>
    <property type="evidence" value="ECO:0007669"/>
    <property type="project" value="UniProtKB-UniRule"/>
</dbReference>
<dbReference type="CDD" id="cd07962">
    <property type="entry name" value="Anticodon_Ia_Val"/>
    <property type="match status" value="1"/>
</dbReference>
<dbReference type="CDD" id="cd00817">
    <property type="entry name" value="ValRS_core"/>
    <property type="match status" value="1"/>
</dbReference>
<dbReference type="FunFam" id="1.10.730.10:FF:000014">
    <property type="entry name" value="Valine--tRNA ligase"/>
    <property type="match status" value="1"/>
</dbReference>
<dbReference type="FunFam" id="3.40.50.620:FF:000032">
    <property type="entry name" value="Valine--tRNA ligase"/>
    <property type="match status" value="1"/>
</dbReference>
<dbReference type="FunFam" id="3.40.50.620:FF:000098">
    <property type="entry name" value="Valine--tRNA ligase"/>
    <property type="match status" value="1"/>
</dbReference>
<dbReference type="FunFam" id="3.90.740.10:FF:000005">
    <property type="entry name" value="Valine--tRNA ligase, mitochondrial"/>
    <property type="match status" value="1"/>
</dbReference>
<dbReference type="Gene3D" id="3.40.50.620">
    <property type="entry name" value="HUPs"/>
    <property type="match status" value="2"/>
</dbReference>
<dbReference type="Gene3D" id="1.10.730.10">
    <property type="entry name" value="Isoleucyl-tRNA Synthetase, Domain 1"/>
    <property type="match status" value="1"/>
</dbReference>
<dbReference type="Gene3D" id="1.10.287.380">
    <property type="entry name" value="Valyl-tRNA synthetase, C-terminal domain"/>
    <property type="match status" value="1"/>
</dbReference>
<dbReference type="HAMAP" id="MF_02004">
    <property type="entry name" value="Val_tRNA_synth_type1"/>
    <property type="match status" value="1"/>
</dbReference>
<dbReference type="InterPro" id="IPR001412">
    <property type="entry name" value="aa-tRNA-synth_I_CS"/>
</dbReference>
<dbReference type="InterPro" id="IPR002300">
    <property type="entry name" value="aa-tRNA-synth_Ia"/>
</dbReference>
<dbReference type="InterPro" id="IPR033705">
    <property type="entry name" value="Anticodon_Ia_Val"/>
</dbReference>
<dbReference type="InterPro" id="IPR013155">
    <property type="entry name" value="M/V/L/I-tRNA-synth_anticd-bd"/>
</dbReference>
<dbReference type="InterPro" id="IPR014729">
    <property type="entry name" value="Rossmann-like_a/b/a_fold"/>
</dbReference>
<dbReference type="InterPro" id="IPR010978">
    <property type="entry name" value="tRNA-bd_arm"/>
</dbReference>
<dbReference type="InterPro" id="IPR009080">
    <property type="entry name" value="tRNAsynth_Ia_anticodon-bd"/>
</dbReference>
<dbReference type="InterPro" id="IPR037118">
    <property type="entry name" value="Val-tRNA_synth_C_sf"/>
</dbReference>
<dbReference type="InterPro" id="IPR019499">
    <property type="entry name" value="Val-tRNA_synth_tRNA-bd"/>
</dbReference>
<dbReference type="InterPro" id="IPR009008">
    <property type="entry name" value="Val/Leu/Ile-tRNA-synth_edit"/>
</dbReference>
<dbReference type="InterPro" id="IPR002303">
    <property type="entry name" value="Valyl-tRNA_ligase"/>
</dbReference>
<dbReference type="NCBIfam" id="NF004349">
    <property type="entry name" value="PRK05729.1"/>
    <property type="match status" value="1"/>
</dbReference>
<dbReference type="NCBIfam" id="TIGR00422">
    <property type="entry name" value="valS"/>
    <property type="match status" value="1"/>
</dbReference>
<dbReference type="PANTHER" id="PTHR11946:SF93">
    <property type="entry name" value="VALINE--TRNA LIGASE, CHLOROPLASTIC_MITOCHONDRIAL 2"/>
    <property type="match status" value="1"/>
</dbReference>
<dbReference type="PANTHER" id="PTHR11946">
    <property type="entry name" value="VALYL-TRNA SYNTHETASES"/>
    <property type="match status" value="1"/>
</dbReference>
<dbReference type="Pfam" id="PF08264">
    <property type="entry name" value="Anticodon_1"/>
    <property type="match status" value="1"/>
</dbReference>
<dbReference type="Pfam" id="PF00133">
    <property type="entry name" value="tRNA-synt_1"/>
    <property type="match status" value="1"/>
</dbReference>
<dbReference type="Pfam" id="PF10458">
    <property type="entry name" value="Val_tRNA-synt_C"/>
    <property type="match status" value="1"/>
</dbReference>
<dbReference type="PRINTS" id="PR00986">
    <property type="entry name" value="TRNASYNTHVAL"/>
</dbReference>
<dbReference type="SUPFAM" id="SSF47323">
    <property type="entry name" value="Anticodon-binding domain of a subclass of class I aminoacyl-tRNA synthetases"/>
    <property type="match status" value="1"/>
</dbReference>
<dbReference type="SUPFAM" id="SSF52374">
    <property type="entry name" value="Nucleotidylyl transferase"/>
    <property type="match status" value="1"/>
</dbReference>
<dbReference type="SUPFAM" id="SSF46589">
    <property type="entry name" value="tRNA-binding arm"/>
    <property type="match status" value="1"/>
</dbReference>
<dbReference type="SUPFAM" id="SSF50677">
    <property type="entry name" value="ValRS/IleRS/LeuRS editing domain"/>
    <property type="match status" value="1"/>
</dbReference>
<dbReference type="PROSITE" id="PS00178">
    <property type="entry name" value="AA_TRNA_LIGASE_I"/>
    <property type="match status" value="1"/>
</dbReference>
<comment type="function">
    <text evidence="1">Catalyzes the attachment of valine to tRNA(Val). As ValRS can inadvertently accommodate and process structurally similar amino acids such as threonine, to avoid such errors, it has a 'posttransfer' editing activity that hydrolyzes mischarged Thr-tRNA(Val) in a tRNA-dependent manner.</text>
</comment>
<comment type="catalytic activity">
    <reaction evidence="1">
        <text>tRNA(Val) + L-valine + ATP = L-valyl-tRNA(Val) + AMP + diphosphate</text>
        <dbReference type="Rhea" id="RHEA:10704"/>
        <dbReference type="Rhea" id="RHEA-COMP:9672"/>
        <dbReference type="Rhea" id="RHEA-COMP:9708"/>
        <dbReference type="ChEBI" id="CHEBI:30616"/>
        <dbReference type="ChEBI" id="CHEBI:33019"/>
        <dbReference type="ChEBI" id="CHEBI:57762"/>
        <dbReference type="ChEBI" id="CHEBI:78442"/>
        <dbReference type="ChEBI" id="CHEBI:78537"/>
        <dbReference type="ChEBI" id="CHEBI:456215"/>
        <dbReference type="EC" id="6.1.1.9"/>
    </reaction>
</comment>
<comment type="subunit">
    <text evidence="1">Monomer.</text>
</comment>
<comment type="subcellular location">
    <subcellularLocation>
        <location evidence="1">Cytoplasm</location>
    </subcellularLocation>
</comment>
<comment type="domain">
    <text evidence="1">ValRS has two distinct active sites: one for aminoacylation and one for editing. The misactivated threonine is translocated from the active site to the editing site.</text>
</comment>
<comment type="domain">
    <text evidence="1">The C-terminal coiled-coil domain is crucial for aminoacylation activity.</text>
</comment>
<comment type="similarity">
    <text evidence="1">Belongs to the class-I aminoacyl-tRNA synthetase family. ValS type 1 subfamily.</text>
</comment>
<gene>
    <name evidence="1" type="primary">valS</name>
    <name type="ordered locus">Tlet_1983</name>
</gene>
<proteinExistence type="inferred from homology"/>
<name>SYV_PSELT</name>
<evidence type="ECO:0000255" key="1">
    <source>
        <dbReference type="HAMAP-Rule" id="MF_02004"/>
    </source>
</evidence>
<keyword id="KW-0030">Aminoacyl-tRNA synthetase</keyword>
<keyword id="KW-0067">ATP-binding</keyword>
<keyword id="KW-0175">Coiled coil</keyword>
<keyword id="KW-0963">Cytoplasm</keyword>
<keyword id="KW-0436">Ligase</keyword>
<keyword id="KW-0547">Nucleotide-binding</keyword>
<keyword id="KW-0648">Protein biosynthesis</keyword>
<keyword id="KW-1185">Reference proteome</keyword>
<organism>
    <name type="scientific">Pseudothermotoga lettingae (strain ATCC BAA-301 / DSM 14385 / NBRC 107922 / TMO)</name>
    <name type="common">Thermotoga lettingae</name>
    <dbReference type="NCBI Taxonomy" id="416591"/>
    <lineage>
        <taxon>Bacteria</taxon>
        <taxon>Thermotogati</taxon>
        <taxon>Thermotogota</taxon>
        <taxon>Thermotogae</taxon>
        <taxon>Thermotogales</taxon>
        <taxon>Thermotogaceae</taxon>
        <taxon>Pseudothermotoga</taxon>
    </lineage>
</organism>
<protein>
    <recommendedName>
        <fullName evidence="1">Valine--tRNA ligase</fullName>
        <ecNumber evidence="1">6.1.1.9</ecNumber>
    </recommendedName>
    <alternativeName>
        <fullName evidence="1">Valyl-tRNA synthetase</fullName>
        <shortName evidence="1">ValRS</shortName>
    </alternativeName>
</protein>
<reference key="1">
    <citation type="submission" date="2007-08" db="EMBL/GenBank/DDBJ databases">
        <title>Complete sequence of Thermotoga lettingae TMO.</title>
        <authorList>
            <consortium name="US DOE Joint Genome Institute"/>
            <person name="Copeland A."/>
            <person name="Lucas S."/>
            <person name="Lapidus A."/>
            <person name="Barry K."/>
            <person name="Glavina del Rio T."/>
            <person name="Dalin E."/>
            <person name="Tice H."/>
            <person name="Pitluck S."/>
            <person name="Foster B."/>
            <person name="Bruce D."/>
            <person name="Schmutz J."/>
            <person name="Larimer F."/>
            <person name="Land M."/>
            <person name="Hauser L."/>
            <person name="Kyrpides N."/>
            <person name="Mikhailova N."/>
            <person name="Nelson K."/>
            <person name="Gogarten J.P."/>
            <person name="Noll K."/>
            <person name="Richardson P."/>
        </authorList>
    </citation>
    <scope>NUCLEOTIDE SEQUENCE [LARGE SCALE GENOMIC DNA]</scope>
    <source>
        <strain>ATCC BAA-301 / DSM 14385 / NBRC 107922 / TMO</strain>
    </source>
</reference>
<feature type="chain" id="PRO_1000070896" description="Valine--tRNA ligase">
    <location>
        <begin position="1"/>
        <end position="861"/>
    </location>
</feature>
<feature type="coiled-coil region" evidence="1">
    <location>
        <begin position="792"/>
        <end position="861"/>
    </location>
</feature>
<feature type="short sequence motif" description="'HIGH' region">
    <location>
        <begin position="42"/>
        <end position="52"/>
    </location>
</feature>
<feature type="short sequence motif" description="'KMSKS' region">
    <location>
        <begin position="521"/>
        <end position="525"/>
    </location>
</feature>
<feature type="binding site" evidence="1">
    <location>
        <position position="524"/>
    </location>
    <ligand>
        <name>ATP</name>
        <dbReference type="ChEBI" id="CHEBI:30616"/>
    </ligand>
</feature>
<accession>A8F8Q3</accession>
<sequence>MNLGTRYSPEQIEKKWYERWVEKGYFAPKGSGIPFVIVIPPPNITGRIHMGHALNITLQDILVRYKRMRGFDTLWVPGEDHAGIATQNAVERYLESQGKSREQLGREKFIEIVWEWAKKYRKEIRQQIETLGASVDWSRERFTLDDGLSKAVRKVFVDLYNRGLIYRGKYMVNWCPRCQTVLSDEEVEHIEESAKLYYVKYPFSGSNEYIVIATTRPETMLGDVAVAVNPEDERYKNISGKTVVLPLMNREIPIITDSYVDPEFGTGAVKITPAHDPNDFDIAKRHSLQFIEIFDNEAKINENGGKYAGLDRYQARKAVLEDLEKAGFLLKVENINHAVGHCYRCDSVIEPRIMDQWFVSMKSLSKRAIEAVENEEIRFVPERWKKVYLHWMYNIRDWCISRQLWWGHRVPVWYCKNCNETIVSEIDIEECPKCGSKSIEQDEDVLDTWFSSALWPFSTLGWPEKTEDLEKYYPTSVLVTGFDIIFFWVARMIIMGYQFMQKKPFTDVYIHQLIRDKHGRKMSKSLGNGIDPIDMSEKYGTDPVRFTLAIFAAQGSDIKLDERYFDTYRKFANKIWNAARFVLINLDNYKPQPLNELSLADRWILSKLQKVISVVSDAIEKYEFNIAARSLYEFFWNEFCDWYIESSKLVLNSEKKAITQNVLVKVLDTSLRLLHPFMPFLSEELWQNLPVHGESIVISDWPEVDVTLINEEAEKNFEKLVQIIRGIRNVKAEMNIPPKRNTKVYIYGETLCKEESSYIEHLSGAQISYVKEKPACCATAFVSENQHVYVDVAGLNLQSEIKRLMKNIEKLQKEREWQLKKLSDDKFLSNAPEEAISEARQKLSEIEDRLKILNQILGDLM</sequence>